<keyword id="KW-0963">Cytoplasm</keyword>
<keyword id="KW-0238">DNA-binding</keyword>
<organism>
    <name type="scientific">Shewanella putrefaciens (strain CN-32 / ATCC BAA-453)</name>
    <dbReference type="NCBI Taxonomy" id="319224"/>
    <lineage>
        <taxon>Bacteria</taxon>
        <taxon>Pseudomonadati</taxon>
        <taxon>Pseudomonadota</taxon>
        <taxon>Gammaproteobacteria</taxon>
        <taxon>Alteromonadales</taxon>
        <taxon>Shewanellaceae</taxon>
        <taxon>Shewanella</taxon>
    </lineage>
</organism>
<comment type="function">
    <text evidence="1">Binds to DNA and alters its conformation. May be involved in regulation of gene expression, nucleoid organization and DNA protection.</text>
</comment>
<comment type="subunit">
    <text evidence="1">Homodimer.</text>
</comment>
<comment type="subcellular location">
    <subcellularLocation>
        <location evidence="1">Cytoplasm</location>
        <location evidence="1">Nucleoid</location>
    </subcellularLocation>
</comment>
<comment type="similarity">
    <text evidence="1">Belongs to the YbaB/EbfC family.</text>
</comment>
<accession>A4Y7T9</accession>
<gene>
    <name type="ordered locus">Sputcn32_2301</name>
</gene>
<evidence type="ECO:0000255" key="1">
    <source>
        <dbReference type="HAMAP-Rule" id="MF_00274"/>
    </source>
</evidence>
<proteinExistence type="inferred from homology"/>
<feature type="chain" id="PRO_1000003823" description="Nucleoid-associated protein Sputcn32_2301">
    <location>
        <begin position="1"/>
        <end position="109"/>
    </location>
</feature>
<dbReference type="EMBL" id="CP000681">
    <property type="protein sequence ID" value="ABP76022.1"/>
    <property type="molecule type" value="Genomic_DNA"/>
</dbReference>
<dbReference type="SMR" id="A4Y7T9"/>
<dbReference type="STRING" id="319224.Sputcn32_2301"/>
<dbReference type="KEGG" id="spc:Sputcn32_2301"/>
<dbReference type="eggNOG" id="COG0718">
    <property type="taxonomic scope" value="Bacteria"/>
</dbReference>
<dbReference type="HOGENOM" id="CLU_140930_0_0_6"/>
<dbReference type="GO" id="GO:0043590">
    <property type="term" value="C:bacterial nucleoid"/>
    <property type="evidence" value="ECO:0007669"/>
    <property type="project" value="UniProtKB-UniRule"/>
</dbReference>
<dbReference type="GO" id="GO:0005829">
    <property type="term" value="C:cytosol"/>
    <property type="evidence" value="ECO:0007669"/>
    <property type="project" value="TreeGrafter"/>
</dbReference>
<dbReference type="GO" id="GO:0003677">
    <property type="term" value="F:DNA binding"/>
    <property type="evidence" value="ECO:0007669"/>
    <property type="project" value="UniProtKB-UniRule"/>
</dbReference>
<dbReference type="FunFam" id="3.30.1310.10:FF:000001">
    <property type="entry name" value="Nucleoid-associated protein YbaB"/>
    <property type="match status" value="1"/>
</dbReference>
<dbReference type="Gene3D" id="3.30.1310.10">
    <property type="entry name" value="Nucleoid-associated protein YbaB-like domain"/>
    <property type="match status" value="1"/>
</dbReference>
<dbReference type="HAMAP" id="MF_00274">
    <property type="entry name" value="DNA_YbaB_EbfC"/>
    <property type="match status" value="1"/>
</dbReference>
<dbReference type="InterPro" id="IPR036894">
    <property type="entry name" value="YbaB-like_sf"/>
</dbReference>
<dbReference type="InterPro" id="IPR004401">
    <property type="entry name" value="YbaB/EbfC"/>
</dbReference>
<dbReference type="NCBIfam" id="TIGR00103">
    <property type="entry name" value="DNA_YbaB_EbfC"/>
    <property type="match status" value="1"/>
</dbReference>
<dbReference type="PANTHER" id="PTHR33449">
    <property type="entry name" value="NUCLEOID-ASSOCIATED PROTEIN YBAB"/>
    <property type="match status" value="1"/>
</dbReference>
<dbReference type="PANTHER" id="PTHR33449:SF1">
    <property type="entry name" value="NUCLEOID-ASSOCIATED PROTEIN YBAB"/>
    <property type="match status" value="1"/>
</dbReference>
<dbReference type="Pfam" id="PF02575">
    <property type="entry name" value="YbaB_DNA_bd"/>
    <property type="match status" value="1"/>
</dbReference>
<dbReference type="PIRSF" id="PIRSF004555">
    <property type="entry name" value="UCP004555"/>
    <property type="match status" value="1"/>
</dbReference>
<dbReference type="SUPFAM" id="SSF82607">
    <property type="entry name" value="YbaB-like"/>
    <property type="match status" value="1"/>
</dbReference>
<protein>
    <recommendedName>
        <fullName evidence="1">Nucleoid-associated protein Sputcn32_2301</fullName>
    </recommendedName>
</protein>
<reference key="1">
    <citation type="submission" date="2007-04" db="EMBL/GenBank/DDBJ databases">
        <title>Complete sequence of Shewanella putrefaciens CN-32.</title>
        <authorList>
            <consortium name="US DOE Joint Genome Institute"/>
            <person name="Copeland A."/>
            <person name="Lucas S."/>
            <person name="Lapidus A."/>
            <person name="Barry K."/>
            <person name="Detter J.C."/>
            <person name="Glavina del Rio T."/>
            <person name="Hammon N."/>
            <person name="Israni S."/>
            <person name="Dalin E."/>
            <person name="Tice H."/>
            <person name="Pitluck S."/>
            <person name="Chain P."/>
            <person name="Malfatti S."/>
            <person name="Shin M."/>
            <person name="Vergez L."/>
            <person name="Schmutz J."/>
            <person name="Larimer F."/>
            <person name="Land M."/>
            <person name="Hauser L."/>
            <person name="Kyrpides N."/>
            <person name="Mikhailova N."/>
            <person name="Romine M.F."/>
            <person name="Fredrickson J."/>
            <person name="Tiedje J."/>
            <person name="Richardson P."/>
        </authorList>
    </citation>
    <scope>NUCLEOTIDE SEQUENCE [LARGE SCALE GENOMIC DNA]</scope>
    <source>
        <strain>CN-32 / ATCC BAA-453</strain>
    </source>
</reference>
<name>Y2301_SHEPC</name>
<sequence length="109" mass="11968">MFGKGGMGNLMKQAQMMQEKMAKMQEEIARMEMVGESGAGLVKVTMTGAHTVRKVEIDPSLMEDDKEMLEDLIAAACNDAARRIEENQKAKMAEVTGGMQLPPGMKMPF</sequence>